<protein>
    <recommendedName>
        <fullName>Coatomer subunit beta</fullName>
    </recommendedName>
    <alternativeName>
        <fullName>Beta-coat protein</fullName>
        <shortName>Beta-COP</shortName>
    </alternativeName>
</protein>
<accession>Q5ZIA5</accession>
<dbReference type="EMBL" id="AJ720879">
    <property type="protein sequence ID" value="CAG32538.1"/>
    <property type="molecule type" value="mRNA"/>
</dbReference>
<dbReference type="RefSeq" id="NP_001006467.1">
    <property type="nucleotide sequence ID" value="NM_001006467.2"/>
</dbReference>
<dbReference type="RefSeq" id="XP_015141877.1">
    <property type="nucleotide sequence ID" value="XM_015286391.4"/>
</dbReference>
<dbReference type="RefSeq" id="XP_040556767.1">
    <property type="nucleotide sequence ID" value="XM_040700833.2"/>
</dbReference>
<dbReference type="RefSeq" id="XP_046774140.1">
    <property type="nucleotide sequence ID" value="XM_046918184.1"/>
</dbReference>
<dbReference type="RefSeq" id="XP_046774141.1">
    <property type="nucleotide sequence ID" value="XM_046918185.1"/>
</dbReference>
<dbReference type="RefSeq" id="XP_046774142.1">
    <property type="nucleotide sequence ID" value="XM_046918186.1"/>
</dbReference>
<dbReference type="RefSeq" id="XP_046797567.1">
    <property type="nucleotide sequence ID" value="XM_046941611.1"/>
</dbReference>
<dbReference type="SMR" id="Q5ZIA5"/>
<dbReference type="BioGRID" id="683642">
    <property type="interactions" value="1"/>
</dbReference>
<dbReference type="FunCoup" id="Q5ZIA5">
    <property type="interactions" value="3017"/>
</dbReference>
<dbReference type="STRING" id="9031.ENSGALP00000009665"/>
<dbReference type="PaxDb" id="9031-ENSGALP00000009665"/>
<dbReference type="Ensembl" id="ENSGALT00010057495.1">
    <property type="protein sequence ID" value="ENSGALP00010034937.1"/>
    <property type="gene ID" value="ENSGALG00010023613.1"/>
</dbReference>
<dbReference type="GeneID" id="423063"/>
<dbReference type="KEGG" id="gga:423063"/>
<dbReference type="CTD" id="1315"/>
<dbReference type="VEuPathDB" id="HostDB:geneid_423063"/>
<dbReference type="eggNOG" id="KOG1058">
    <property type="taxonomic scope" value="Eukaryota"/>
</dbReference>
<dbReference type="GeneTree" id="ENSGT00390000005270"/>
<dbReference type="HOGENOM" id="CLU_006949_0_0_1"/>
<dbReference type="InParanoid" id="Q5ZIA5"/>
<dbReference type="OMA" id="IYKNFDW"/>
<dbReference type="OrthoDB" id="10261439at2759"/>
<dbReference type="PhylomeDB" id="Q5ZIA5"/>
<dbReference type="TreeFam" id="TF105737"/>
<dbReference type="Reactome" id="R-GGA-6798695">
    <property type="pathway name" value="Neutrophil degranulation"/>
</dbReference>
<dbReference type="Reactome" id="R-GGA-6807878">
    <property type="pathway name" value="COPI-mediated anterograde transport"/>
</dbReference>
<dbReference type="Reactome" id="R-GGA-6811434">
    <property type="pathway name" value="COPI-dependent Golgi-to-ER retrograde traffic"/>
</dbReference>
<dbReference type="PRO" id="PR:Q5ZIA5"/>
<dbReference type="Proteomes" id="UP000000539">
    <property type="component" value="Chromosome 5"/>
</dbReference>
<dbReference type="Bgee" id="ENSGALG00000006015">
    <property type="expression patterns" value="Expressed in granulocyte and 12 other cell types or tissues"/>
</dbReference>
<dbReference type="GO" id="GO:0030126">
    <property type="term" value="C:COPI vesicle coat"/>
    <property type="evidence" value="ECO:0000318"/>
    <property type="project" value="GO_Central"/>
</dbReference>
<dbReference type="GO" id="GO:0005829">
    <property type="term" value="C:cytosol"/>
    <property type="evidence" value="ECO:0007669"/>
    <property type="project" value="Ensembl"/>
</dbReference>
<dbReference type="GO" id="GO:0000139">
    <property type="term" value="C:Golgi membrane"/>
    <property type="evidence" value="ECO:0007669"/>
    <property type="project" value="UniProtKB-SubCell"/>
</dbReference>
<dbReference type="GO" id="GO:0005198">
    <property type="term" value="F:structural molecule activity"/>
    <property type="evidence" value="ECO:0007669"/>
    <property type="project" value="InterPro"/>
</dbReference>
<dbReference type="GO" id="GO:0006888">
    <property type="term" value="P:endoplasmic reticulum to Golgi vesicle-mediated transport"/>
    <property type="evidence" value="ECO:0000318"/>
    <property type="project" value="GO_Central"/>
</dbReference>
<dbReference type="GO" id="GO:0006891">
    <property type="term" value="P:intra-Golgi vesicle-mediated transport"/>
    <property type="evidence" value="ECO:0000318"/>
    <property type="project" value="GO_Central"/>
</dbReference>
<dbReference type="GO" id="GO:0006886">
    <property type="term" value="P:intracellular protein transport"/>
    <property type="evidence" value="ECO:0007669"/>
    <property type="project" value="InterPro"/>
</dbReference>
<dbReference type="Gene3D" id="1.25.10.10">
    <property type="entry name" value="Leucine-rich Repeat Variant"/>
    <property type="match status" value="1"/>
</dbReference>
<dbReference type="InterPro" id="IPR011989">
    <property type="entry name" value="ARM-like"/>
</dbReference>
<dbReference type="InterPro" id="IPR016024">
    <property type="entry name" value="ARM-type_fold"/>
</dbReference>
<dbReference type="InterPro" id="IPR002553">
    <property type="entry name" value="Clathrin/coatomer_adapt-like_N"/>
</dbReference>
<dbReference type="InterPro" id="IPR011710">
    <property type="entry name" value="Coatomer_bsu_C"/>
</dbReference>
<dbReference type="InterPro" id="IPR016460">
    <property type="entry name" value="COPB1"/>
</dbReference>
<dbReference type="InterPro" id="IPR029446">
    <property type="entry name" value="COPB1_appendage_platform_dom"/>
</dbReference>
<dbReference type="PANTHER" id="PTHR10635">
    <property type="entry name" value="COATOMER SUBUNIT BETA"/>
    <property type="match status" value="1"/>
</dbReference>
<dbReference type="PANTHER" id="PTHR10635:SF0">
    <property type="entry name" value="COATOMER SUBUNIT BETA"/>
    <property type="match status" value="1"/>
</dbReference>
<dbReference type="Pfam" id="PF01602">
    <property type="entry name" value="Adaptin_N"/>
    <property type="match status" value="1"/>
</dbReference>
<dbReference type="Pfam" id="PF07718">
    <property type="entry name" value="Coatamer_beta_C"/>
    <property type="match status" value="1"/>
</dbReference>
<dbReference type="Pfam" id="PF14806">
    <property type="entry name" value="Coatomer_b_Cpla"/>
    <property type="match status" value="1"/>
</dbReference>
<dbReference type="PIRSF" id="PIRSF005727">
    <property type="entry name" value="Coatomer_beta_subunit"/>
    <property type="match status" value="1"/>
</dbReference>
<dbReference type="SUPFAM" id="SSF48371">
    <property type="entry name" value="ARM repeat"/>
    <property type="match status" value="1"/>
</dbReference>
<keyword id="KW-0963">Cytoplasm</keyword>
<keyword id="KW-0968">Cytoplasmic vesicle</keyword>
<keyword id="KW-0931">ER-Golgi transport</keyword>
<keyword id="KW-0333">Golgi apparatus</keyword>
<keyword id="KW-0472">Membrane</keyword>
<keyword id="KW-0653">Protein transport</keyword>
<keyword id="KW-1185">Reference proteome</keyword>
<keyword id="KW-0677">Repeat</keyword>
<keyword id="KW-0813">Transport</keyword>
<organism>
    <name type="scientific">Gallus gallus</name>
    <name type="common">Chicken</name>
    <dbReference type="NCBI Taxonomy" id="9031"/>
    <lineage>
        <taxon>Eukaryota</taxon>
        <taxon>Metazoa</taxon>
        <taxon>Chordata</taxon>
        <taxon>Craniata</taxon>
        <taxon>Vertebrata</taxon>
        <taxon>Euteleostomi</taxon>
        <taxon>Archelosauria</taxon>
        <taxon>Archosauria</taxon>
        <taxon>Dinosauria</taxon>
        <taxon>Saurischia</taxon>
        <taxon>Theropoda</taxon>
        <taxon>Coelurosauria</taxon>
        <taxon>Aves</taxon>
        <taxon>Neognathae</taxon>
        <taxon>Galloanserae</taxon>
        <taxon>Galliformes</taxon>
        <taxon>Phasianidae</taxon>
        <taxon>Phasianinae</taxon>
        <taxon>Gallus</taxon>
    </lineage>
</organism>
<sequence>MTAAENVCYTLINVPMDSEPPSEISLKNDLEKGDVKLKTEALKKVIIMILNGEKLPGLLMTIIRFVLPLQDHTIKKLLLVFWEIVPKTTPDGRLLQEMILVCDAYRKDLQHPNEFIRGSTLRFLCKLKEAELLEPLMPAIRACLEHRHSYVRRNAVLAIYTIYRNFEHLIPDAPELIHDFLVNEKDASCKRNAFMMLIHADQDRALDYLSTCIDQVQTFGDILQLVIVELIYKVCHANPSERARFIRCIYNLLQSSSPAVKYEAAGTLVTLSSAPTAIKAAAQCYIDLIIKESDNNVKLIVLDRLVELKEHPSHERVLQDLVMDILRVLSTPDLEVRKKTLQLALDLVSSRNVEELVIVLKKEVIKTNNVTEHEDTDKYRQLLVRTLHSCSVRFPDMAANVIPVLMEFLSDNNEAAAADVLEFVREAIQRFDNLRPLIVEKMLEVFHAIKSVKIYRGALWILGEYCSTKEDIQSVMTEVRRSLGEIPIVESEIKKEAGELKPEEEVTVGPVQKLVTEMGTYATQSALSSSRPTKKEEDRPPLRGFLLDGDFFVAASLATTLTKIALRYVSLVQEKKKQNSFIAEAMLLMATILHLGKSSLPKKPITDDDVDRISLCLKVLSECSPLMNDIFNKECRQSLSHMLSAKLEEEKLSQKKESEKRNVTVQPDDPISFMQLTAKNEMSSKEDQFQLSLLAAMGNTQRKEAADPLASKLNKVTQLTGFSDPVYAEAYVHVNQYDIVLDVLVVNQTSDTLQNCTLELATLGDLKLVEKPSPLTLAPHDFANIKANVKVASTENGIIFGNIVYDVSGAASDRNCVVLSDIHIDIMDYIQPASCTDAEFRQMWAEFEWENKVTVNTNIIDLNEYLQHILKSTNMKCLTPEKALSGYCGFMAANLYARSIFGEDALANVSIEKPIHLGPEAPVTGHIRIRAKSQGMALSLGDKINLSQKKTSL</sequence>
<feature type="chain" id="PRO_0000347230" description="Coatomer subunit beta">
    <location>
        <begin position="1"/>
        <end position="953"/>
    </location>
</feature>
<feature type="repeat" description="HEAT 1">
    <location>
        <begin position="17"/>
        <end position="54"/>
    </location>
</feature>
<feature type="repeat" description="HEAT 2">
    <location>
        <begin position="96"/>
        <end position="131"/>
    </location>
</feature>
<feature type="repeat" description="HEAT 3">
    <location>
        <begin position="132"/>
        <end position="168"/>
    </location>
</feature>
<feature type="repeat" description="HEAT 4">
    <location>
        <begin position="240"/>
        <end position="276"/>
    </location>
</feature>
<feature type="repeat" description="HEAT 5">
    <location>
        <begin position="277"/>
        <end position="314"/>
    </location>
</feature>
<feature type="repeat" description="HEAT 6">
    <location>
        <begin position="316"/>
        <end position="353"/>
    </location>
</feature>
<feature type="repeat" description="HEAT 7">
    <location>
        <begin position="396"/>
        <end position="433"/>
    </location>
</feature>
<evidence type="ECO:0000250" key="1"/>
<evidence type="ECO:0000269" key="2">
    <source>
    </source>
</evidence>
<comment type="function">
    <text evidence="1">The coatomer is a cytosolic protein complex that binds to dilysine motifs and reversibly associates with Golgi non-clathrin-coated vesicles, which further mediate biosynthetic protein transport from the ER, via the Golgi up to the trans Golgi network. Coatomer complex is required for budding from Golgi membranes, and is essential for the retrograde Golgi-to-ER transport of dilysine-tagged proteins (By similarity).</text>
</comment>
<comment type="subunit">
    <text evidence="1">Oligomeric complex that consists of at least the alpha, beta, beta', gamma, delta, epsilon and zeta subunits.</text>
</comment>
<comment type="subcellular location">
    <subcellularLocation>
        <location evidence="1">Cytoplasm</location>
    </subcellularLocation>
    <subcellularLocation>
        <location evidence="1">Golgi apparatus membrane</location>
        <topology evidence="1">Peripheral membrane protein</topology>
        <orientation evidence="1">Cytoplasmic side</orientation>
    </subcellularLocation>
    <subcellularLocation>
        <location evidence="1">Cytoplasmic vesicle</location>
        <location evidence="1">COPI-coated vesicle membrane</location>
        <topology evidence="1">Peripheral membrane protein</topology>
        <orientation evidence="1">Cytoplasmic side</orientation>
    </subcellularLocation>
    <text evidence="1">The coatomer is cytoplasmic or polymerized on the cytoplasmic side of the Golgi, as well as on the vesicles/buds originating from it.</text>
</comment>
<comment type="developmental stage">
    <text evidence="2">Expressed more highly in male embryonic day 3 (3 dpc) and 5 dpc whole embryos, paired urogenital system at 7 dpc and gonads at 9 dpc than in females.</text>
</comment>
<gene>
    <name type="primary">COPB1</name>
    <name type="synonym">COPB</name>
    <name type="ORF">RCJMB04_28l17</name>
</gene>
<proteinExistence type="evidence at transcript level"/>
<name>COPB_CHICK</name>
<reference key="1">
    <citation type="journal article" date="2005" name="Genome Biol.">
        <title>Full-length cDNAs from chicken bursal lymphocytes to facilitate gene function analysis.</title>
        <authorList>
            <person name="Caldwell R.B."/>
            <person name="Kierzek A.M."/>
            <person name="Arakawa H."/>
            <person name="Bezzubov Y."/>
            <person name="Zaim J."/>
            <person name="Fiedler P."/>
            <person name="Kutter S."/>
            <person name="Blagodatski A."/>
            <person name="Kostovska D."/>
            <person name="Koter M."/>
            <person name="Plachy J."/>
            <person name="Carninci P."/>
            <person name="Hayashizaki Y."/>
            <person name="Buerstedde J.-M."/>
        </authorList>
    </citation>
    <scope>NUCLEOTIDE SEQUENCE [LARGE SCALE MRNA]</scope>
    <source>
        <strain>CB</strain>
        <tissue>Bursa of Fabricius</tissue>
    </source>
</reference>
<reference key="2">
    <citation type="journal article" date="2010" name="Theriogenology">
        <title>Identification of early transcripts related to male development in chicken embryos.</title>
        <authorList>
            <person name="Lin Y.P."/>
            <person name="Chen L.R."/>
            <person name="Chen C.F."/>
            <person name="Liou J.F."/>
            <person name="Chen Y.L."/>
            <person name="Yang J.R."/>
            <person name="Shiue Y.L."/>
        </authorList>
    </citation>
    <scope>DEVELOPMENTAL STAGE</scope>
</reference>